<sequence>MEESAGATSAQSAATSVSESPAEETILVCASEPVTVDGGRLLVCRSPGPEGFYKVPLGLKVALPTGYAMLVAQRGGGRTTNGIVDAGFRGEVQAIVAPGRPRAQFYCTPLRLAPGIATDVPFFEVFAPKRDEDAGYDIPCPRELVLPPGGAETVTLPVHRTDGRHWAYVFGRSSLNLRGIVVFPTPWESGPCRFRIQNRGAHPVTLESGQRVAQLVLTREPLGWITGRSPFPATPRAPMQHRPAWLFARDFVAPSSARGARGFGSTGL</sequence>
<protein>
    <recommendedName>
        <fullName evidence="1">Deoxyuridine 5'-triphosphate nucleotidohydrolase</fullName>
        <shortName evidence="1">dUTPase</shortName>
        <ecNumber evidence="1">3.6.1.23</ecNumber>
    </recommendedName>
    <alternativeName>
        <fullName evidence="1">dUTP pyrophosphatase</fullName>
    </alternativeName>
</protein>
<comment type="function">
    <text evidence="1">Involved in nucleotide metabolism: produces dUMP, the immediate precursor of thymidine nucleotides and decreases the intracellular concentration of dUTP to avoid uracil incorporation into viral DNA.</text>
</comment>
<comment type="catalytic activity">
    <reaction evidence="1">
        <text>dUTP + H2O = dUMP + diphosphate + H(+)</text>
        <dbReference type="Rhea" id="RHEA:10248"/>
        <dbReference type="ChEBI" id="CHEBI:15377"/>
        <dbReference type="ChEBI" id="CHEBI:15378"/>
        <dbReference type="ChEBI" id="CHEBI:33019"/>
        <dbReference type="ChEBI" id="CHEBI:61555"/>
        <dbReference type="ChEBI" id="CHEBI:246422"/>
        <dbReference type="EC" id="3.6.1.23"/>
    </reaction>
</comment>
<comment type="cofactor">
    <cofactor evidence="1">
        <name>Mg(2+)</name>
        <dbReference type="ChEBI" id="CHEBI:18420"/>
    </cofactor>
</comment>
<comment type="similarity">
    <text evidence="1">Belongs to the dUTPase family.</text>
</comment>
<reference key="1">
    <citation type="journal article" date="1996" name="J. Virol.">
        <title>Identification and characterization of pseudorabies virus dUTPase.</title>
        <authorList>
            <person name="Joens A."/>
            <person name="Mettenleiter T.C."/>
        </authorList>
    </citation>
    <scope>NUCLEOTIDE SEQUENCE [GENOMIC DNA]</scope>
</reference>
<reference key="2">
    <citation type="journal article" date="1995" name="J. Virol.">
        <title>Pseudorabies virus and equine herpesvirus 1 share a nonessential gene which is absent in other herpesviruses and located adjacent to a highly conserved gene cluster.</title>
        <authorList>
            <person name="Baumeister J."/>
            <person name="Klupp B.G."/>
            <person name="Mettenleiter T.C."/>
        </authorList>
    </citation>
    <scope>NUCLEOTIDE SEQUENCE [GENOMIC DNA] OF 196-268</scope>
</reference>
<organism>
    <name type="scientific">Suid herpesvirus 1 (strain Kaplan)</name>
    <name type="common">SuHV-1</name>
    <name type="synonym">Pseudorabies virus (strain Kaplan)</name>
    <dbReference type="NCBI Taxonomy" id="33703"/>
    <lineage>
        <taxon>Viruses</taxon>
        <taxon>Duplodnaviria</taxon>
        <taxon>Heunggongvirae</taxon>
        <taxon>Peploviricota</taxon>
        <taxon>Herviviricetes</taxon>
        <taxon>Herpesvirales</taxon>
        <taxon>Orthoherpesviridae</taxon>
        <taxon>Alphaherpesvirinae</taxon>
        <taxon>Varicellovirus</taxon>
        <taxon>Varicellovirus suidalpha1</taxon>
        <taxon>Suid herpesvirus 1</taxon>
    </lineage>
</organism>
<keyword id="KW-0378">Hydrolase</keyword>
<keyword id="KW-0460">Magnesium</keyword>
<keyword id="KW-0479">Metal-binding</keyword>
<keyword id="KW-0546">Nucleotide metabolism</keyword>
<name>DUT_SUHVK</name>
<organismHost>
    <name type="scientific">Sus scrofa</name>
    <name type="common">Pig</name>
    <dbReference type="NCBI Taxonomy" id="9823"/>
</organismHost>
<feature type="chain" id="PRO_0000182964" description="Deoxyuridine 5'-triphosphate nucleotidohydrolase">
    <location>
        <begin position="1"/>
        <end position="268"/>
    </location>
</feature>
<feature type="binding site" evidence="1">
    <location>
        <begin position="172"/>
        <end position="174"/>
    </location>
    <ligand>
        <name>substrate</name>
    </ligand>
</feature>
<feature type="binding site" evidence="1">
    <location>
        <begin position="263"/>
        <end position="264"/>
    </location>
    <ligand>
        <name>substrate</name>
    </ligand>
</feature>
<dbReference type="EC" id="3.6.1.23" evidence="1"/>
<dbReference type="EMBL" id="U38547">
    <property type="protein sequence ID" value="AAB02855.1"/>
    <property type="molecule type" value="Genomic_DNA"/>
</dbReference>
<dbReference type="EMBL" id="X87246">
    <property type="protein sequence ID" value="CAA60688.1"/>
    <property type="molecule type" value="Genomic_DNA"/>
</dbReference>
<dbReference type="RefSeq" id="YP_068324.1">
    <property type="nucleotide sequence ID" value="NC_006151.1"/>
</dbReference>
<dbReference type="SMR" id="Q90030"/>
<dbReference type="GeneID" id="2952537"/>
<dbReference type="KEGG" id="vg:2952537"/>
<dbReference type="GO" id="GO:0004170">
    <property type="term" value="F:dUTP diphosphatase activity"/>
    <property type="evidence" value="ECO:0007669"/>
    <property type="project" value="UniProtKB-EC"/>
</dbReference>
<dbReference type="GO" id="GO:0046872">
    <property type="term" value="F:metal ion binding"/>
    <property type="evidence" value="ECO:0007669"/>
    <property type="project" value="UniProtKB-KW"/>
</dbReference>
<dbReference type="GO" id="GO:0046080">
    <property type="term" value="P:dUTP metabolic process"/>
    <property type="evidence" value="ECO:0007669"/>
    <property type="project" value="InterPro"/>
</dbReference>
<dbReference type="CDD" id="cd07557">
    <property type="entry name" value="trimeric_dUTPase"/>
    <property type="match status" value="1"/>
</dbReference>
<dbReference type="Gene3D" id="2.70.40.10">
    <property type="match status" value="2"/>
</dbReference>
<dbReference type="HAMAP" id="MF_04031">
    <property type="entry name" value="HSV_DUT"/>
    <property type="match status" value="1"/>
</dbReference>
<dbReference type="InterPro" id="IPR029054">
    <property type="entry name" value="dUTPase-like"/>
</dbReference>
<dbReference type="InterPro" id="IPR036157">
    <property type="entry name" value="dUTPase-like_sf"/>
</dbReference>
<dbReference type="InterPro" id="IPR033704">
    <property type="entry name" value="dUTPase_trimeric"/>
</dbReference>
<dbReference type="InterPro" id="IPR034745">
    <property type="entry name" value="HSV_DUT"/>
</dbReference>
<dbReference type="Pfam" id="PF00692">
    <property type="entry name" value="dUTPase"/>
    <property type="match status" value="1"/>
</dbReference>
<dbReference type="SUPFAM" id="SSF51283">
    <property type="entry name" value="dUTPase-like"/>
    <property type="match status" value="2"/>
</dbReference>
<proteinExistence type="inferred from homology"/>
<gene>
    <name evidence="1" type="primary">DUT</name>
    <name type="ordered locus">UL50</name>
</gene>
<accession>Q90030</accession>
<accession>Q85226</accession>
<evidence type="ECO:0000255" key="1">
    <source>
        <dbReference type="HAMAP-Rule" id="MF_04031"/>
    </source>
</evidence>